<organism>
    <name type="scientific">Bungarus candidus</name>
    <name type="common">Malayan krait</name>
    <dbReference type="NCBI Taxonomy" id="92438"/>
    <lineage>
        <taxon>Eukaryota</taxon>
        <taxon>Metazoa</taxon>
        <taxon>Chordata</taxon>
        <taxon>Craniata</taxon>
        <taxon>Vertebrata</taxon>
        <taxon>Euteleostomi</taxon>
        <taxon>Lepidosauria</taxon>
        <taxon>Squamata</taxon>
        <taxon>Bifurcata</taxon>
        <taxon>Unidentata</taxon>
        <taxon>Episquamata</taxon>
        <taxon>Toxicofera</taxon>
        <taxon>Serpentes</taxon>
        <taxon>Colubroidea</taxon>
        <taxon>Elapidae</taxon>
        <taxon>Bungarinae</taxon>
        <taxon>Bungarus</taxon>
    </lineage>
</organism>
<accession>Q6IZ95</accession>
<comment type="function">
    <text evidence="2">Binds with low affinity to muscular (alpha-1-beta-1-delta-epsilon/CHRNA1-CHRNB1-CHRND-CHRNE) and very low affinity to neuronal (alpha-7/CHRNA7) nicotinic acetylcholine receptor (nAChR).</text>
</comment>
<comment type="subcellular location">
    <subcellularLocation>
        <location evidence="1">Secreted</location>
    </subcellularLocation>
</comment>
<comment type="tissue specificity">
    <text evidence="4">Expressed by the venom gland.</text>
</comment>
<comment type="similarity">
    <text evidence="4">Belongs to the three-finger toxin family. Ancestral subfamily. Orphan group II sub-subfamily.</text>
</comment>
<protein>
    <recommendedName>
        <fullName>Neurotoxin Ntx4</fullName>
    </recommendedName>
</protein>
<sequence>MKTLLLTLVVVTIVCLDLGYTLTCLICPEKYCQKVHTCRDGENLCVKRFYEGKRFGKKYPRGCAATCPEAKPHEIVECCSTDKCNK</sequence>
<keyword id="KW-0008">Acetylcholine receptor inhibiting toxin</keyword>
<keyword id="KW-1015">Disulfide bond</keyword>
<keyword id="KW-0872">Ion channel impairing toxin</keyword>
<keyword id="KW-0528">Neurotoxin</keyword>
<keyword id="KW-0629">Postsynaptic neurotoxin</keyword>
<keyword id="KW-0964">Secreted</keyword>
<keyword id="KW-0732">Signal</keyword>
<keyword id="KW-0800">Toxin</keyword>
<reference key="1">
    <citation type="submission" date="2004-04" db="EMBL/GenBank/DDBJ databases">
        <title>Non-conventional toxins from snakes.</title>
        <authorList>
            <person name="Siew J."/>
            <person name="Armugam A."/>
            <person name="Jeyaseelan K."/>
        </authorList>
    </citation>
    <scope>NUCLEOTIDE SEQUENCE [MRNA]</scope>
    <source>
        <tissue>Venom gland</tissue>
    </source>
</reference>
<evidence type="ECO:0000250" key="1"/>
<evidence type="ECO:0000250" key="2">
    <source>
        <dbReference type="UniProtKB" id="O42255"/>
    </source>
</evidence>
<evidence type="ECO:0000250" key="3">
    <source>
        <dbReference type="UniProtKB" id="Q8AY51"/>
    </source>
</evidence>
<evidence type="ECO:0000305" key="4"/>
<feature type="signal peptide" evidence="1">
    <location>
        <begin position="1"/>
        <end position="21"/>
    </location>
</feature>
<feature type="chain" id="PRO_0000293101" description="Neurotoxin Ntx4">
    <location>
        <begin position="22"/>
        <end position="86"/>
    </location>
</feature>
<feature type="disulfide bond" evidence="3">
    <location>
        <begin position="24"/>
        <end position="45"/>
    </location>
</feature>
<feature type="disulfide bond" evidence="3">
    <location>
        <begin position="27"/>
        <end position="32"/>
    </location>
</feature>
<feature type="disulfide bond" evidence="3">
    <location>
        <begin position="38"/>
        <end position="63"/>
    </location>
</feature>
<feature type="disulfide bond" evidence="3">
    <location>
        <begin position="67"/>
        <end position="78"/>
    </location>
</feature>
<feature type="disulfide bond" evidence="3">
    <location>
        <begin position="79"/>
        <end position="84"/>
    </location>
</feature>
<name>3NO24_BUNCA</name>
<proteinExistence type="inferred from homology"/>
<dbReference type="EMBL" id="AY611643">
    <property type="protein sequence ID" value="AAT38875.1"/>
    <property type="molecule type" value="mRNA"/>
</dbReference>
<dbReference type="SMR" id="Q6IZ95"/>
<dbReference type="GO" id="GO:0005576">
    <property type="term" value="C:extracellular region"/>
    <property type="evidence" value="ECO:0007669"/>
    <property type="project" value="UniProtKB-SubCell"/>
</dbReference>
<dbReference type="GO" id="GO:0030550">
    <property type="term" value="F:acetylcholine receptor inhibitor activity"/>
    <property type="evidence" value="ECO:0007669"/>
    <property type="project" value="UniProtKB-KW"/>
</dbReference>
<dbReference type="GO" id="GO:0099106">
    <property type="term" value="F:ion channel regulator activity"/>
    <property type="evidence" value="ECO:0007669"/>
    <property type="project" value="UniProtKB-KW"/>
</dbReference>
<dbReference type="GO" id="GO:0090729">
    <property type="term" value="F:toxin activity"/>
    <property type="evidence" value="ECO:0007669"/>
    <property type="project" value="UniProtKB-KW"/>
</dbReference>
<dbReference type="CDD" id="cd00206">
    <property type="entry name" value="TFP_snake_toxin"/>
    <property type="match status" value="1"/>
</dbReference>
<dbReference type="FunFam" id="2.10.60.10:FF:000024">
    <property type="entry name" value="Cytotoxin 1"/>
    <property type="match status" value="1"/>
</dbReference>
<dbReference type="Gene3D" id="2.10.60.10">
    <property type="entry name" value="CD59"/>
    <property type="match status" value="1"/>
</dbReference>
<dbReference type="InterPro" id="IPR003571">
    <property type="entry name" value="Snake_3FTx"/>
</dbReference>
<dbReference type="InterPro" id="IPR045860">
    <property type="entry name" value="Snake_toxin-like_sf"/>
</dbReference>
<dbReference type="InterPro" id="IPR018354">
    <property type="entry name" value="Snake_toxin_con_site"/>
</dbReference>
<dbReference type="InterPro" id="IPR054131">
    <property type="entry name" value="Toxin_cobra-type"/>
</dbReference>
<dbReference type="Pfam" id="PF21947">
    <property type="entry name" value="Toxin_cobra-type"/>
    <property type="match status" value="1"/>
</dbReference>
<dbReference type="SUPFAM" id="SSF57302">
    <property type="entry name" value="Snake toxin-like"/>
    <property type="match status" value="1"/>
</dbReference>
<dbReference type="PROSITE" id="PS00272">
    <property type="entry name" value="SNAKE_TOXIN"/>
    <property type="match status" value="1"/>
</dbReference>